<dbReference type="EMBL" id="X69881">
    <property type="protein sequence ID" value="CAA49507.1"/>
    <property type="status" value="ALT_INIT"/>
    <property type="molecule type" value="Genomic_DNA"/>
</dbReference>
<dbReference type="EMBL" id="X78993">
    <property type="protein sequence ID" value="CAA55600.1"/>
    <property type="status" value="ALT_INIT"/>
    <property type="molecule type" value="Genomic_DNA"/>
</dbReference>
<dbReference type="EMBL" id="Z35964">
    <property type="protein sequence ID" value="CAA85048.1"/>
    <property type="status" value="ALT_INIT"/>
    <property type="molecule type" value="Genomic_DNA"/>
</dbReference>
<dbReference type="EMBL" id="AY692685">
    <property type="protein sequence ID" value="AAT92704.1"/>
    <property type="status" value="ALT_INIT"/>
    <property type="molecule type" value="Genomic_DNA"/>
</dbReference>
<dbReference type="EMBL" id="BK006936">
    <property type="protein sequence ID" value="DAA07216.1"/>
    <property type="molecule type" value="Genomic_DNA"/>
</dbReference>
<dbReference type="PIR" id="S31313">
    <property type="entry name" value="S31313"/>
</dbReference>
<dbReference type="RefSeq" id="NP_009653.2">
    <property type="nucleotide sequence ID" value="NM_001178443.1"/>
</dbReference>
<dbReference type="PDB" id="8GA8">
    <property type="method" value="EM"/>
    <property type="resolution" value="3.50 A"/>
    <property type="chains" value="M=1-430"/>
</dbReference>
<dbReference type="PDB" id="8HPO">
    <property type="method" value="EM"/>
    <property type="resolution" value="2.60 A"/>
    <property type="chains" value="E=1-430"/>
</dbReference>
<dbReference type="PDBsum" id="8GA8"/>
<dbReference type="PDBsum" id="8HPO"/>
<dbReference type="EMDB" id="EMD-29892"/>
<dbReference type="EMDB" id="EMD-34935"/>
<dbReference type="SMR" id="P38255"/>
<dbReference type="BioGRID" id="32801">
    <property type="interactions" value="590"/>
</dbReference>
<dbReference type="ComplexPortal" id="CPX-1852">
    <property type="entry name" value="RPD3L histone deacetylase complex"/>
</dbReference>
<dbReference type="DIP" id="DIP-6755N"/>
<dbReference type="FunCoup" id="P38255">
    <property type="interactions" value="201"/>
</dbReference>
<dbReference type="IntAct" id="P38255">
    <property type="interactions" value="18"/>
</dbReference>
<dbReference type="MINT" id="P38255"/>
<dbReference type="STRING" id="4932.YBR095C"/>
<dbReference type="iPTMnet" id="P38255"/>
<dbReference type="PaxDb" id="4932-YBR095C"/>
<dbReference type="PeptideAtlas" id="P38255"/>
<dbReference type="EnsemblFungi" id="YBR095C_mRNA">
    <property type="protein sequence ID" value="YBR095C"/>
    <property type="gene ID" value="YBR095C"/>
</dbReference>
<dbReference type="GeneID" id="852392"/>
<dbReference type="KEGG" id="sce:YBR095C"/>
<dbReference type="AGR" id="SGD:S000000299"/>
<dbReference type="SGD" id="S000000299">
    <property type="gene designation" value="RXT2"/>
</dbReference>
<dbReference type="VEuPathDB" id="FungiDB:YBR095C"/>
<dbReference type="eggNOG" id="ENOG502QU3T">
    <property type="taxonomic scope" value="Eukaryota"/>
</dbReference>
<dbReference type="HOGENOM" id="CLU_756436_0_0_1"/>
<dbReference type="InParanoid" id="P38255"/>
<dbReference type="OMA" id="YNGSEHN"/>
<dbReference type="OrthoDB" id="2405722at2759"/>
<dbReference type="BioCyc" id="YEAST:G3O-29059-MONOMER"/>
<dbReference type="BioGRID-ORCS" id="852392">
    <property type="hits" value="0 hits in 10 CRISPR screens"/>
</dbReference>
<dbReference type="PRO" id="PR:P38255"/>
<dbReference type="Proteomes" id="UP000002311">
    <property type="component" value="Chromosome II"/>
</dbReference>
<dbReference type="RNAct" id="P38255">
    <property type="molecule type" value="protein"/>
</dbReference>
<dbReference type="GO" id="GO:0005829">
    <property type="term" value="C:cytosol"/>
    <property type="evidence" value="ECO:0000314"/>
    <property type="project" value="SGD"/>
</dbReference>
<dbReference type="GO" id="GO:0005634">
    <property type="term" value="C:nucleus"/>
    <property type="evidence" value="ECO:0000314"/>
    <property type="project" value="SGD"/>
</dbReference>
<dbReference type="GO" id="GO:0033698">
    <property type="term" value="C:Rpd3L complex"/>
    <property type="evidence" value="ECO:0000314"/>
    <property type="project" value="SGD"/>
</dbReference>
<dbReference type="GO" id="GO:0070210">
    <property type="term" value="C:Rpd3L-Expanded complex"/>
    <property type="evidence" value="ECO:0007005"/>
    <property type="project" value="SGD"/>
</dbReference>
<dbReference type="GO" id="GO:0000747">
    <property type="term" value="P:conjugation with cellular fusion"/>
    <property type="evidence" value="ECO:0000315"/>
    <property type="project" value="SGD"/>
</dbReference>
<dbReference type="GO" id="GO:0001403">
    <property type="term" value="P:invasive growth in response to glucose limitation"/>
    <property type="evidence" value="ECO:0000315"/>
    <property type="project" value="SGD"/>
</dbReference>
<dbReference type="GO" id="GO:0061188">
    <property type="term" value="P:negative regulation of rDNA heterochromatin formation"/>
    <property type="evidence" value="ECO:0000315"/>
    <property type="project" value="SGD"/>
</dbReference>
<dbReference type="GO" id="GO:0061186">
    <property type="term" value="P:negative regulation of silent mating-type cassette heterochromatin formation"/>
    <property type="evidence" value="ECO:0000315"/>
    <property type="project" value="SGD"/>
</dbReference>
<dbReference type="GO" id="GO:0000122">
    <property type="term" value="P:negative regulation of transcription by RNA polymerase II"/>
    <property type="evidence" value="ECO:0000315"/>
    <property type="project" value="SGD"/>
</dbReference>
<dbReference type="GO" id="GO:0006334">
    <property type="term" value="P:nucleosome assembly"/>
    <property type="evidence" value="ECO:0000303"/>
    <property type="project" value="ComplexPortal"/>
</dbReference>
<dbReference type="GO" id="GO:2000219">
    <property type="term" value="P:positive regulation of invasive growth in response to glucose limitation"/>
    <property type="evidence" value="ECO:0000315"/>
    <property type="project" value="SGD"/>
</dbReference>
<dbReference type="GO" id="GO:0006357">
    <property type="term" value="P:regulation of transcription by RNA polymerase II"/>
    <property type="evidence" value="ECO:0000303"/>
    <property type="project" value="ComplexPortal"/>
</dbReference>
<dbReference type="InterPro" id="IPR039602">
    <property type="entry name" value="Rxt2"/>
</dbReference>
<dbReference type="InterPro" id="IPR013904">
    <property type="entry name" value="RXT2_N"/>
</dbReference>
<dbReference type="PANTHER" id="PTHR28232">
    <property type="entry name" value="TRANSCRIPTIONAL REGULATORY PROTEIN RXT2"/>
    <property type="match status" value="1"/>
</dbReference>
<dbReference type="PANTHER" id="PTHR28232:SF1">
    <property type="entry name" value="TRANSCRIPTIONAL REGULATORY PROTEIN RXT2"/>
    <property type="match status" value="1"/>
</dbReference>
<dbReference type="Pfam" id="PF08595">
    <property type="entry name" value="RXT2_N"/>
    <property type="match status" value="1"/>
</dbReference>
<name>RXT2_YEAST</name>
<accession>P38255</accession>
<accession>D6VQ96</accession>
<gene>
    <name type="primary">RXT2</name>
    <name type="synonym">RAF60</name>
    <name type="ordered locus">YBR095C</name>
    <name type="ORF">YBR0822</name>
</gene>
<evidence type="ECO:0000256" key="1">
    <source>
        <dbReference type="SAM" id="MobiDB-lite"/>
    </source>
</evidence>
<evidence type="ECO:0000269" key="2">
    <source>
    </source>
</evidence>
<evidence type="ECO:0000269" key="3">
    <source>
    </source>
</evidence>
<evidence type="ECO:0000269" key="4">
    <source>
    </source>
</evidence>
<evidence type="ECO:0000269" key="5">
    <source>
    </source>
</evidence>
<evidence type="ECO:0000269" key="6">
    <source>
    </source>
</evidence>
<evidence type="ECO:0000305" key="7"/>
<evidence type="ECO:0007829" key="8">
    <source>
        <dbReference type="PDB" id="8GA8"/>
    </source>
</evidence>
<evidence type="ECO:0007829" key="9">
    <source>
        <dbReference type="PDB" id="8HPO"/>
    </source>
</evidence>
<protein>
    <recommendedName>
        <fullName>Transcriptional regulatory protein RXT2</fullName>
    </recommendedName>
</protein>
<reference key="1">
    <citation type="submission" date="1992-12" db="EMBL/GenBank/DDBJ databases">
        <authorList>
            <person name="Dekker P.J.T."/>
            <person name="Hoekert W."/>
            <person name="van Oosterum K."/>
            <person name="Grivell L.A."/>
        </authorList>
    </citation>
    <scope>NUCLEOTIDE SEQUENCE [GENOMIC DNA]</scope>
    <source>
        <strain>ATCC 26109 / X2180</strain>
    </source>
</reference>
<reference key="2">
    <citation type="journal article" date="1994" name="Yeast">
        <title>Analysis of a 70 kb region on the right arm of yeast chromosome II.</title>
        <authorList>
            <person name="Mannhaupt G."/>
            <person name="Stucka R."/>
            <person name="Ehnle S."/>
            <person name="Vetter I."/>
            <person name="Feldmann H."/>
        </authorList>
    </citation>
    <scope>NUCLEOTIDE SEQUENCE [GENOMIC DNA]</scope>
    <source>
        <strain>ATCC 204508 / S288c</strain>
    </source>
</reference>
<reference key="3">
    <citation type="journal article" date="1994" name="EMBO J.">
        <title>Complete DNA sequence of yeast chromosome II.</title>
        <authorList>
            <person name="Feldmann H."/>
            <person name="Aigle M."/>
            <person name="Aljinovic G."/>
            <person name="Andre B."/>
            <person name="Baclet M.C."/>
            <person name="Barthe C."/>
            <person name="Baur A."/>
            <person name="Becam A.-M."/>
            <person name="Biteau N."/>
            <person name="Boles E."/>
            <person name="Brandt T."/>
            <person name="Brendel M."/>
            <person name="Brueckner M."/>
            <person name="Bussereau F."/>
            <person name="Christiansen C."/>
            <person name="Contreras R."/>
            <person name="Crouzet M."/>
            <person name="Cziepluch C."/>
            <person name="Demolis N."/>
            <person name="Delaveau T."/>
            <person name="Doignon F."/>
            <person name="Domdey H."/>
            <person name="Duesterhus S."/>
            <person name="Dubois E."/>
            <person name="Dujon B."/>
            <person name="El Bakkoury M."/>
            <person name="Entian K.-D."/>
            <person name="Feuermann M."/>
            <person name="Fiers W."/>
            <person name="Fobo G.M."/>
            <person name="Fritz C."/>
            <person name="Gassenhuber J."/>
            <person name="Glansdorff N."/>
            <person name="Goffeau A."/>
            <person name="Grivell L.A."/>
            <person name="de Haan M."/>
            <person name="Hein C."/>
            <person name="Herbert C.J."/>
            <person name="Hollenberg C.P."/>
            <person name="Holmstroem K."/>
            <person name="Jacq C."/>
            <person name="Jacquet M."/>
            <person name="Jauniaux J.-C."/>
            <person name="Jonniaux J.-L."/>
            <person name="Kallesoee T."/>
            <person name="Kiesau P."/>
            <person name="Kirchrath L."/>
            <person name="Koetter P."/>
            <person name="Korol S."/>
            <person name="Liebl S."/>
            <person name="Logghe M."/>
            <person name="Lohan A.J.E."/>
            <person name="Louis E.J."/>
            <person name="Li Z.Y."/>
            <person name="Maat M.J."/>
            <person name="Mallet L."/>
            <person name="Mannhaupt G."/>
            <person name="Messenguy F."/>
            <person name="Miosga T."/>
            <person name="Molemans F."/>
            <person name="Mueller S."/>
            <person name="Nasr F."/>
            <person name="Obermaier B."/>
            <person name="Perea J."/>
            <person name="Pierard A."/>
            <person name="Piravandi E."/>
            <person name="Pohl F.M."/>
            <person name="Pohl T.M."/>
            <person name="Potier S."/>
            <person name="Proft M."/>
            <person name="Purnelle B."/>
            <person name="Ramezani Rad M."/>
            <person name="Rieger M."/>
            <person name="Rose M."/>
            <person name="Schaaff-Gerstenschlaeger I."/>
            <person name="Scherens B."/>
            <person name="Schwarzlose C."/>
            <person name="Skala J."/>
            <person name="Slonimski P.P."/>
            <person name="Smits P.H.M."/>
            <person name="Souciet J.-L."/>
            <person name="Steensma H.Y."/>
            <person name="Stucka R."/>
            <person name="Urrestarazu L.A."/>
            <person name="van der Aart Q.J.M."/>
            <person name="Van Dyck L."/>
            <person name="Vassarotti A."/>
            <person name="Vetter I."/>
            <person name="Vierendeels F."/>
            <person name="Vissers S."/>
            <person name="Wagner G."/>
            <person name="de Wergifosse P."/>
            <person name="Wolfe K.H."/>
            <person name="Zagulski M."/>
            <person name="Zimmermann F.K."/>
            <person name="Mewes H.-W."/>
            <person name="Kleine K."/>
        </authorList>
    </citation>
    <scope>NUCLEOTIDE SEQUENCE [LARGE SCALE GENOMIC DNA]</scope>
    <source>
        <strain>ATCC 204508 / S288c</strain>
    </source>
</reference>
<reference key="4">
    <citation type="journal article" date="2014" name="G3 (Bethesda)">
        <title>The reference genome sequence of Saccharomyces cerevisiae: Then and now.</title>
        <authorList>
            <person name="Engel S.R."/>
            <person name="Dietrich F.S."/>
            <person name="Fisk D.G."/>
            <person name="Binkley G."/>
            <person name="Balakrishnan R."/>
            <person name="Costanzo M.C."/>
            <person name="Dwight S.S."/>
            <person name="Hitz B.C."/>
            <person name="Karra K."/>
            <person name="Nash R.S."/>
            <person name="Weng S."/>
            <person name="Wong E.D."/>
            <person name="Lloyd P."/>
            <person name="Skrzypek M.S."/>
            <person name="Miyasato S.R."/>
            <person name="Simison M."/>
            <person name="Cherry J.M."/>
        </authorList>
    </citation>
    <scope>GENOME REANNOTATION</scope>
    <source>
        <strain>ATCC 204508 / S288c</strain>
    </source>
</reference>
<reference key="5">
    <citation type="journal article" date="2007" name="Genome Res.">
        <title>Approaching a complete repository of sequence-verified protein-encoding clones for Saccharomyces cerevisiae.</title>
        <authorList>
            <person name="Hu Y."/>
            <person name="Rolfs A."/>
            <person name="Bhullar B."/>
            <person name="Murthy T.V.S."/>
            <person name="Zhu C."/>
            <person name="Berger M.F."/>
            <person name="Camargo A.A."/>
            <person name="Kelley F."/>
            <person name="McCarron S."/>
            <person name="Jepson D."/>
            <person name="Richardson A."/>
            <person name="Raphael J."/>
            <person name="Moreira D."/>
            <person name="Taycher E."/>
            <person name="Zuo D."/>
            <person name="Mohr S."/>
            <person name="Kane M.F."/>
            <person name="Williamson J."/>
            <person name="Simpson A.J.G."/>
            <person name="Bulyk M.L."/>
            <person name="Harlow E."/>
            <person name="Marsischky G."/>
            <person name="Kolodner R.D."/>
            <person name="LaBaer J."/>
        </authorList>
    </citation>
    <scope>NUCLEOTIDE SEQUENCE [GENOMIC DNA]</scope>
    <source>
        <strain>ATCC 204508 / S288c</strain>
    </source>
</reference>
<reference key="6">
    <citation type="journal article" date="2003" name="Nature">
        <title>Sequencing and comparison of yeast species to identify genes and regulatory elements.</title>
        <authorList>
            <person name="Kellis M."/>
            <person name="Patterson N."/>
            <person name="Endrizzi M."/>
            <person name="Birren B.W."/>
            <person name="Lander E.S."/>
        </authorList>
    </citation>
    <scope>IDENTIFICATION OF PROBABLE INITIATION SITE</scope>
</reference>
<reference key="7">
    <citation type="journal article" date="2003" name="Nature">
        <title>Global analysis of protein localization in budding yeast.</title>
        <authorList>
            <person name="Huh W.-K."/>
            <person name="Falvo J.V."/>
            <person name="Gerke L.C."/>
            <person name="Carroll A.S."/>
            <person name="Howson R.W."/>
            <person name="Weissman J.S."/>
            <person name="O'Shea E.K."/>
        </authorList>
    </citation>
    <scope>SUBCELLULAR LOCATION [LARGE SCALE ANALYSIS]</scope>
</reference>
<reference key="8">
    <citation type="journal article" date="2003" name="Nature">
        <title>Global analysis of protein expression in yeast.</title>
        <authorList>
            <person name="Ghaemmaghami S."/>
            <person name="Huh W.-K."/>
            <person name="Bower K."/>
            <person name="Howson R.W."/>
            <person name="Belle A."/>
            <person name="Dephoure N."/>
            <person name="O'Shea E.K."/>
            <person name="Weissman J.S."/>
        </authorList>
    </citation>
    <scope>LEVEL OF PROTEIN EXPRESSION [LARGE SCALE ANALYSIS]</scope>
</reference>
<reference key="9">
    <citation type="journal article" date="2005" name="Biochim. Biophys. Acta">
        <title>Stable incorporation of sequence specific repressors Ash1 and Ume6 into the Rpd3L complex.</title>
        <authorList>
            <person name="Carrozza M.J."/>
            <person name="Florens L."/>
            <person name="Swanson S.K."/>
            <person name="Shia W.-J."/>
            <person name="Anderson S."/>
            <person name="Yates J."/>
            <person name="Washburn M.P."/>
            <person name="Workman J.L."/>
        </authorList>
    </citation>
    <scope>IDENTIFICATION IN THE RPD3 COMPLEX</scope>
    <scope>IDENTIFICATION BY MASS SPECTROMETRY</scope>
</reference>
<reference key="10">
    <citation type="journal article" date="2005" name="J. Biol. Chem.">
        <title>Raf60, a novel component of the Rpd3 histone deacetylase complex required for Rpd3 activity in Saccharomyces cerevisiae.</title>
        <authorList>
            <person name="Colina A.R."/>
            <person name="Young D."/>
        </authorList>
    </citation>
    <scope>FUNCTION</scope>
    <scope>IDENTIFICATION IN THE RPD3C(L) COMPLEX</scope>
    <scope>IDENTIFICATION BY MASS SPECTROMETRY</scope>
</reference>
<reference key="11">
    <citation type="journal article" date="2005" name="Cell">
        <title>Cotranscriptional set2 methylation of histone H3 lysine 36 recruits a repressive Rpd3 complex.</title>
        <authorList>
            <person name="Keogh M.-C."/>
            <person name="Kurdistani S.K."/>
            <person name="Morris S.A."/>
            <person name="Ahn S.H."/>
            <person name="Podolny V."/>
            <person name="Collins S.R."/>
            <person name="Schuldiner M."/>
            <person name="Chin K."/>
            <person name="Punna T."/>
            <person name="Thompson N.J."/>
            <person name="Boone C."/>
            <person name="Emili A."/>
            <person name="Weissman J.S."/>
            <person name="Hughes T.R."/>
            <person name="Strahl B.D."/>
            <person name="Grunstein M."/>
            <person name="Greenblatt J.F."/>
            <person name="Buratowski S."/>
            <person name="Krogan N.J."/>
        </authorList>
    </citation>
    <scope>IDENTIFICATION IN THE RPD3C(L) COMPLEX</scope>
    <scope>IDENTIFICATION BY MASS SPECTROMETRY</scope>
</reference>
<reference key="12">
    <citation type="journal article" date="2007" name="J. Proteome Res.">
        <title>Large-scale phosphorylation analysis of alpha-factor-arrested Saccharomyces cerevisiae.</title>
        <authorList>
            <person name="Li X."/>
            <person name="Gerber S.A."/>
            <person name="Rudner A.D."/>
            <person name="Beausoleil S.A."/>
            <person name="Haas W."/>
            <person name="Villen J."/>
            <person name="Elias J.E."/>
            <person name="Gygi S.P."/>
        </authorList>
    </citation>
    <scope>IDENTIFICATION BY MASS SPECTROMETRY [LARGE SCALE ANALYSIS]</scope>
    <source>
        <strain>ADR376</strain>
    </source>
</reference>
<sequence length="430" mass="48629">MTIRSSMKNNAELESKSVLANESNIISTFTRRIIKEKSGNYQVLKRSLDGKLIYPEATGISSNRGNKLLQRSEVVTRRDLNNSKPMIEQTVFYNGSEHRLLQTNIVTDSRRKRIKFTPDINVEPVLVGDENDIDGSEKEDENITDEYYGEEDDDDLSKLVNVKEILTPILSLGDIINHKTISRTFSSPILKNLALQIILMIEKEQMSVVRYSQFLEVFLGDHPEPIYESNLNLPSYNHNLTLPEDRGASDEDDINNKNNINEVNSNSLSTEAGHINNGMEEFGEEDPFFALPRLEQSNALLSLLPSSSGSASISTLTAAEQQQLNEEIESARQLSQIALQRNKEFIRNLQKIRKSVIKANRIRGRILNWSREYLGISDDDITIPVALRVVKRGLISATTNKTTNFEEEIENTMEDGVVDDNEPDEEANRA</sequence>
<proteinExistence type="evidence at protein level"/>
<organism>
    <name type="scientific">Saccharomyces cerevisiae (strain ATCC 204508 / S288c)</name>
    <name type="common">Baker's yeast</name>
    <dbReference type="NCBI Taxonomy" id="559292"/>
    <lineage>
        <taxon>Eukaryota</taxon>
        <taxon>Fungi</taxon>
        <taxon>Dikarya</taxon>
        <taxon>Ascomycota</taxon>
        <taxon>Saccharomycotina</taxon>
        <taxon>Saccharomycetes</taxon>
        <taxon>Saccharomycetales</taxon>
        <taxon>Saccharomycetaceae</taxon>
        <taxon>Saccharomyces</taxon>
    </lineage>
</organism>
<keyword id="KW-0002">3D-structure</keyword>
<keyword id="KW-0156">Chromatin regulator</keyword>
<keyword id="KW-0539">Nucleus</keyword>
<keyword id="KW-1185">Reference proteome</keyword>
<keyword id="KW-0678">Repressor</keyword>
<keyword id="KW-0804">Transcription</keyword>
<keyword id="KW-0805">Transcription regulation</keyword>
<comment type="function">
    <text evidence="4">Component of the RPD3C(L) histone deacetylase complex (HDAC) responsible for the deacetylation of lysine residues on the N-terminal part of the core histones (H2A, H2B, H3 and H4). Histone deacetylation gives a tag for epigenetic repression and plays an important role in transcriptional regulation, cell cycle progression and developmental events.</text>
</comment>
<comment type="subunit">
    <text evidence="4 5 6">Component of the RPD3C(L) complex composed of at least ASH1, CTI6, DEP1, PHO23, RPD3, RXT2, RXT3, SAP30, SDS3, SIN3, UME1 and UME6.</text>
</comment>
<comment type="interaction">
    <interactant intactId="EBI-21537">
        <id>P38255</id>
    </interactant>
    <interactant intactId="EBI-15864">
        <id>P32561</id>
        <label>RPD3</label>
    </interactant>
    <organismsDiffer>false</organismsDiffer>
    <experiments>7</experiments>
</comment>
<comment type="subcellular location">
    <subcellularLocation>
        <location evidence="2">Nucleus</location>
    </subcellularLocation>
</comment>
<comment type="miscellaneous">
    <text evidence="3">Present with 1630 molecules/cell in log phase SD medium.</text>
</comment>
<comment type="similarity">
    <text evidence="7">Belongs to the RXT2 family.</text>
</comment>
<comment type="sequence caution" evidence="7">
    <conflict type="erroneous initiation">
        <sequence resource="EMBL-CDS" id="AAT92704"/>
    </conflict>
</comment>
<comment type="sequence caution" evidence="7">
    <conflict type="erroneous initiation">
        <sequence resource="EMBL-CDS" id="CAA49507"/>
    </conflict>
</comment>
<comment type="sequence caution" evidence="7">
    <conflict type="erroneous initiation">
        <sequence resource="EMBL-CDS" id="CAA55600"/>
    </conflict>
</comment>
<comment type="sequence caution" evidence="7">
    <conflict type="erroneous initiation">
        <sequence resource="EMBL-CDS" id="CAA85048"/>
    </conflict>
</comment>
<feature type="chain" id="PRO_0000202482" description="Transcriptional regulatory protein RXT2">
    <location>
        <begin position="1"/>
        <end position="430"/>
    </location>
</feature>
<feature type="region of interest" description="Disordered" evidence="1">
    <location>
        <begin position="408"/>
        <end position="430"/>
    </location>
</feature>
<feature type="helix" evidence="9">
    <location>
        <begin position="23"/>
        <end position="36"/>
    </location>
</feature>
<feature type="strand" evidence="9">
    <location>
        <begin position="48"/>
        <end position="50"/>
    </location>
</feature>
<feature type="helix" evidence="9">
    <location>
        <begin position="71"/>
        <end position="74"/>
    </location>
</feature>
<feature type="helix" evidence="9">
    <location>
        <begin position="84"/>
        <end position="86"/>
    </location>
</feature>
<feature type="strand" evidence="9">
    <location>
        <begin position="90"/>
        <end position="93"/>
    </location>
</feature>
<feature type="strand" evidence="9">
    <location>
        <begin position="96"/>
        <end position="101"/>
    </location>
</feature>
<feature type="helix" evidence="8">
    <location>
        <begin position="156"/>
        <end position="159"/>
    </location>
</feature>
<feature type="helix" evidence="9">
    <location>
        <begin position="162"/>
        <end position="165"/>
    </location>
</feature>
<feature type="turn" evidence="8">
    <location>
        <begin position="170"/>
        <end position="172"/>
    </location>
</feature>
<feature type="helix" evidence="9">
    <location>
        <begin position="174"/>
        <end position="177"/>
    </location>
</feature>
<feature type="helix" evidence="9">
    <location>
        <begin position="181"/>
        <end position="183"/>
    </location>
</feature>
<feature type="turn" evidence="9">
    <location>
        <begin position="184"/>
        <end position="186"/>
    </location>
</feature>
<feature type="helix" evidence="9">
    <location>
        <begin position="190"/>
        <end position="217"/>
    </location>
</feature>
<feature type="strand" evidence="8">
    <location>
        <begin position="219"/>
        <end position="221"/>
    </location>
</feature>
<feature type="turn" evidence="9">
    <location>
        <begin position="228"/>
        <end position="230"/>
    </location>
</feature>
<feature type="helix" evidence="9">
    <location>
        <begin position="298"/>
        <end position="301"/>
    </location>
</feature>
<feature type="helix" evidence="9">
    <location>
        <begin position="319"/>
        <end position="373"/>
    </location>
</feature>